<feature type="chain" id="PRO_0000125608" description="Large ribosomal subunit protein uL1">
    <location>
        <begin position="1"/>
        <end position="230"/>
    </location>
</feature>
<comment type="function">
    <text evidence="1">Binds directly to 23S rRNA. The L1 stalk is quite mobile in the ribosome, and is involved in E site tRNA release.</text>
</comment>
<comment type="function">
    <text evidence="1">Protein L1 is also a translational repressor protein, it controls the translation of the L11 operon by binding to its mRNA.</text>
</comment>
<comment type="subunit">
    <text evidence="1">Part of the 50S ribosomal subunit.</text>
</comment>
<comment type="similarity">
    <text evidence="1">Belongs to the universal ribosomal protein uL1 family.</text>
</comment>
<keyword id="KW-0678">Repressor</keyword>
<keyword id="KW-0687">Ribonucleoprotein</keyword>
<keyword id="KW-0689">Ribosomal protein</keyword>
<keyword id="KW-0694">RNA-binding</keyword>
<keyword id="KW-0699">rRNA-binding</keyword>
<keyword id="KW-0810">Translation regulation</keyword>
<keyword id="KW-0820">tRNA-binding</keyword>
<gene>
    <name evidence="1" type="primary">rplA</name>
    <name type="ordered locus">BCE_0098</name>
</gene>
<sequence>MAKRGKKYVEAAKLVDRAAAYSATEAVELVKKTNTAKFDATVEAAFRLGVDPKKADQQIRGAVVLPHGTGKVQRVLVFAKGEKAKEAEAAGADFVGDADYIGKIQQGWFDFDVVVATPDMMGEVGKLGRVLGPKGLMPNPKTGTVTFDVTKAVNEIKAGKVEYRVDKAGNIHVPIGKVSFEDAKLVENFRTIADTLQKVKPAAAKGTYMKNVTVASTMGPGVRVDVSTLA</sequence>
<reference key="1">
    <citation type="journal article" date="2004" name="Nucleic Acids Res.">
        <title>The genome sequence of Bacillus cereus ATCC 10987 reveals metabolic adaptations and a large plasmid related to Bacillus anthracis pXO1.</title>
        <authorList>
            <person name="Rasko D.A."/>
            <person name="Ravel J."/>
            <person name="Oekstad O.A."/>
            <person name="Helgason E."/>
            <person name="Cer R.Z."/>
            <person name="Jiang L."/>
            <person name="Shores K.A."/>
            <person name="Fouts D.E."/>
            <person name="Tourasse N.J."/>
            <person name="Angiuoli S.V."/>
            <person name="Kolonay J.F."/>
            <person name="Nelson W.C."/>
            <person name="Kolstoe A.-B."/>
            <person name="Fraser C.M."/>
            <person name="Read T.D."/>
        </authorList>
    </citation>
    <scope>NUCLEOTIDE SEQUENCE [LARGE SCALE GENOMIC DNA]</scope>
    <source>
        <strain>ATCC 10987 / NRS 248</strain>
    </source>
</reference>
<protein>
    <recommendedName>
        <fullName evidence="1">Large ribosomal subunit protein uL1</fullName>
    </recommendedName>
    <alternativeName>
        <fullName evidence="2">50S ribosomal protein L1</fullName>
    </alternativeName>
</protein>
<accession>Q73FA8</accession>
<organism>
    <name type="scientific">Bacillus cereus (strain ATCC 10987 / NRS 248)</name>
    <dbReference type="NCBI Taxonomy" id="222523"/>
    <lineage>
        <taxon>Bacteria</taxon>
        <taxon>Bacillati</taxon>
        <taxon>Bacillota</taxon>
        <taxon>Bacilli</taxon>
        <taxon>Bacillales</taxon>
        <taxon>Bacillaceae</taxon>
        <taxon>Bacillus</taxon>
        <taxon>Bacillus cereus group</taxon>
    </lineage>
</organism>
<proteinExistence type="inferred from homology"/>
<evidence type="ECO:0000255" key="1">
    <source>
        <dbReference type="HAMAP-Rule" id="MF_01318"/>
    </source>
</evidence>
<evidence type="ECO:0000305" key="2"/>
<dbReference type="EMBL" id="AE017194">
    <property type="protein sequence ID" value="AAS39034.1"/>
    <property type="molecule type" value="Genomic_DNA"/>
</dbReference>
<dbReference type="SMR" id="Q73FA8"/>
<dbReference type="KEGG" id="bca:BCE_0098"/>
<dbReference type="HOGENOM" id="CLU_062853_0_0_9"/>
<dbReference type="Proteomes" id="UP000002527">
    <property type="component" value="Chromosome"/>
</dbReference>
<dbReference type="GO" id="GO:0015934">
    <property type="term" value="C:large ribosomal subunit"/>
    <property type="evidence" value="ECO:0007669"/>
    <property type="project" value="InterPro"/>
</dbReference>
<dbReference type="GO" id="GO:0019843">
    <property type="term" value="F:rRNA binding"/>
    <property type="evidence" value="ECO:0007669"/>
    <property type="project" value="UniProtKB-UniRule"/>
</dbReference>
<dbReference type="GO" id="GO:0003735">
    <property type="term" value="F:structural constituent of ribosome"/>
    <property type="evidence" value="ECO:0007669"/>
    <property type="project" value="InterPro"/>
</dbReference>
<dbReference type="GO" id="GO:0000049">
    <property type="term" value="F:tRNA binding"/>
    <property type="evidence" value="ECO:0007669"/>
    <property type="project" value="UniProtKB-KW"/>
</dbReference>
<dbReference type="GO" id="GO:0006417">
    <property type="term" value="P:regulation of translation"/>
    <property type="evidence" value="ECO:0007669"/>
    <property type="project" value="UniProtKB-KW"/>
</dbReference>
<dbReference type="GO" id="GO:0006412">
    <property type="term" value="P:translation"/>
    <property type="evidence" value="ECO:0007669"/>
    <property type="project" value="UniProtKB-UniRule"/>
</dbReference>
<dbReference type="CDD" id="cd00403">
    <property type="entry name" value="Ribosomal_L1"/>
    <property type="match status" value="1"/>
</dbReference>
<dbReference type="FunFam" id="3.40.50.790:FF:000001">
    <property type="entry name" value="50S ribosomal protein L1"/>
    <property type="match status" value="1"/>
</dbReference>
<dbReference type="Gene3D" id="3.30.190.20">
    <property type="match status" value="1"/>
</dbReference>
<dbReference type="Gene3D" id="3.40.50.790">
    <property type="match status" value="1"/>
</dbReference>
<dbReference type="HAMAP" id="MF_01318_B">
    <property type="entry name" value="Ribosomal_uL1_B"/>
    <property type="match status" value="1"/>
</dbReference>
<dbReference type="InterPro" id="IPR005878">
    <property type="entry name" value="Ribosom_uL1_bac-type"/>
</dbReference>
<dbReference type="InterPro" id="IPR002143">
    <property type="entry name" value="Ribosomal_uL1"/>
</dbReference>
<dbReference type="InterPro" id="IPR023674">
    <property type="entry name" value="Ribosomal_uL1-like"/>
</dbReference>
<dbReference type="InterPro" id="IPR028364">
    <property type="entry name" value="Ribosomal_uL1/biogenesis"/>
</dbReference>
<dbReference type="InterPro" id="IPR016095">
    <property type="entry name" value="Ribosomal_uL1_3-a/b-sand"/>
</dbReference>
<dbReference type="InterPro" id="IPR023673">
    <property type="entry name" value="Ribosomal_uL1_CS"/>
</dbReference>
<dbReference type="NCBIfam" id="TIGR01169">
    <property type="entry name" value="rplA_bact"/>
    <property type="match status" value="1"/>
</dbReference>
<dbReference type="PANTHER" id="PTHR36427">
    <property type="entry name" value="54S RIBOSOMAL PROTEIN L1, MITOCHONDRIAL"/>
    <property type="match status" value="1"/>
</dbReference>
<dbReference type="PANTHER" id="PTHR36427:SF3">
    <property type="entry name" value="LARGE RIBOSOMAL SUBUNIT PROTEIN UL1M"/>
    <property type="match status" value="1"/>
</dbReference>
<dbReference type="Pfam" id="PF00687">
    <property type="entry name" value="Ribosomal_L1"/>
    <property type="match status" value="1"/>
</dbReference>
<dbReference type="PIRSF" id="PIRSF002155">
    <property type="entry name" value="Ribosomal_L1"/>
    <property type="match status" value="1"/>
</dbReference>
<dbReference type="SUPFAM" id="SSF56808">
    <property type="entry name" value="Ribosomal protein L1"/>
    <property type="match status" value="1"/>
</dbReference>
<dbReference type="PROSITE" id="PS01199">
    <property type="entry name" value="RIBOSOMAL_L1"/>
    <property type="match status" value="1"/>
</dbReference>
<name>RL1_BACC1</name>